<feature type="chain" id="PRO_0000115151" description="DNA mismatch repair protein MutS">
    <location>
        <begin position="1"/>
        <end position="851"/>
    </location>
</feature>
<feature type="binding site" evidence="1">
    <location>
        <begin position="602"/>
        <end position="609"/>
    </location>
    <ligand>
        <name>ATP</name>
        <dbReference type="ChEBI" id="CHEBI:30616"/>
    </ligand>
</feature>
<sequence length="851" mass="95445">MAKTNISPGMQQYLDIKKDYPDAFLLFRMGDFYELFYDDAVKAAQLLEIGLTSRNKNAENPIPMAGVPHHSAQQYIDVLIELGYKVAVAEQMEDPKQAVGVVKREVVQVITPGTVVDSAKPDSANNFLVAVDFDGCRYGLAYMDVSTGEFCVTDLADFTSVRSEIQNLKAKEVLLGFDLSEEEQTILVKQMNLLLSYEETVYEDKSLIDGQLTTVELTAAGKLLQYVHKTQMRELSHLQALVHYEIKDYLQMSYATKSSLDLVENARTNKKHGSLYWLLDETKTAMGMRLLRSWIDRPLVSKEAILERQEIIQVFLNAFIERTDLSNSLKGVYDIERLSSRVSFGKANPKDLLQLGHTLAQVPYIKAILESFDSPCVDKLVNDIDSLPELEYLIRTAIDPDAPATISEGSIIRTGFDERLDHYRKVMREGTGWIADIEAKERQASGINNLKIDYNKKDGYYFHVTTSNLSLVPEHFFRKATLKNSERYGTAELAKIEGQMLEAREESSSLEYDIFMCIRAQVETYINRLQKLAKILATVDVLQSLAVVAETNHYIRPQFNDNHVITIQEGRHAVVEKVMGVQEYIPNSISFDQQTSIQLITGPNMSGKSTYMRQLALTVIMAQMGSFVAADHVDLPLFDAIFTRIGAADDLISGQSTFMVEMMEANQAIKRASDNSLILFDELGRGTATYDGMALAQAIIEYIHDRVGAKTIFATHYHELTDLSTKLTSLVNVHVATLEKDGDVTFLHKIAEGPADKSYGIHVAKIAGLPKSLLKRADEVLTRLETQSRSTEIMSVPPQVESSSAVRQGQLSLFGDEEKAHEIRQALEAIDVMNMTPLQAMTTLYELKKLL</sequence>
<evidence type="ECO:0000255" key="1">
    <source>
        <dbReference type="HAMAP-Rule" id="MF_00096"/>
    </source>
</evidence>
<proteinExistence type="inferred from homology"/>
<accession>Q5X9F3</accession>
<comment type="function">
    <text evidence="1">This protein is involved in the repair of mismatches in DNA. It is possible that it carries out the mismatch recognition step. This protein has a weak ATPase activity.</text>
</comment>
<comment type="similarity">
    <text evidence="1">Belongs to the DNA mismatch repair MutS family.</text>
</comment>
<organism>
    <name type="scientific">Streptococcus pyogenes serotype M6 (strain ATCC BAA-946 / MGAS10394)</name>
    <dbReference type="NCBI Taxonomy" id="286636"/>
    <lineage>
        <taxon>Bacteria</taxon>
        <taxon>Bacillati</taxon>
        <taxon>Bacillota</taxon>
        <taxon>Bacilli</taxon>
        <taxon>Lactobacillales</taxon>
        <taxon>Streptococcaceae</taxon>
        <taxon>Streptococcus</taxon>
    </lineage>
</organism>
<gene>
    <name evidence="1" type="primary">mutS</name>
    <name type="ordered locus">M6_Spy1825</name>
</gene>
<protein>
    <recommendedName>
        <fullName evidence="1">DNA mismatch repair protein MutS</fullName>
    </recommendedName>
</protein>
<reference key="1">
    <citation type="journal article" date="2004" name="J. Infect. Dis.">
        <title>Progress toward characterization of the group A Streptococcus metagenome: complete genome sequence of a macrolide-resistant serotype M6 strain.</title>
        <authorList>
            <person name="Banks D.J."/>
            <person name="Porcella S.F."/>
            <person name="Barbian K.D."/>
            <person name="Beres S.B."/>
            <person name="Philips L.E."/>
            <person name="Voyich J.M."/>
            <person name="DeLeo F.R."/>
            <person name="Martin J.M."/>
            <person name="Somerville G.A."/>
            <person name="Musser J.M."/>
        </authorList>
    </citation>
    <scope>NUCLEOTIDE SEQUENCE [LARGE SCALE GENOMIC DNA]</scope>
    <source>
        <strain>ATCC BAA-946 / MGAS10394</strain>
    </source>
</reference>
<dbReference type="EMBL" id="CP000003">
    <property type="protein sequence ID" value="AAT87960.1"/>
    <property type="molecule type" value="Genomic_DNA"/>
</dbReference>
<dbReference type="RefSeq" id="WP_011185079.1">
    <property type="nucleotide sequence ID" value="NC_006086.1"/>
</dbReference>
<dbReference type="SMR" id="Q5X9F3"/>
<dbReference type="KEGG" id="spa:M6_Spy1825"/>
<dbReference type="HOGENOM" id="CLU_002472_3_1_9"/>
<dbReference type="Proteomes" id="UP000001167">
    <property type="component" value="Chromosome"/>
</dbReference>
<dbReference type="GO" id="GO:0005829">
    <property type="term" value="C:cytosol"/>
    <property type="evidence" value="ECO:0007669"/>
    <property type="project" value="TreeGrafter"/>
</dbReference>
<dbReference type="GO" id="GO:0005524">
    <property type="term" value="F:ATP binding"/>
    <property type="evidence" value="ECO:0007669"/>
    <property type="project" value="UniProtKB-UniRule"/>
</dbReference>
<dbReference type="GO" id="GO:0140664">
    <property type="term" value="F:ATP-dependent DNA damage sensor activity"/>
    <property type="evidence" value="ECO:0007669"/>
    <property type="project" value="InterPro"/>
</dbReference>
<dbReference type="GO" id="GO:0003684">
    <property type="term" value="F:damaged DNA binding"/>
    <property type="evidence" value="ECO:0007669"/>
    <property type="project" value="UniProtKB-UniRule"/>
</dbReference>
<dbReference type="GO" id="GO:0030983">
    <property type="term" value="F:mismatched DNA binding"/>
    <property type="evidence" value="ECO:0007669"/>
    <property type="project" value="InterPro"/>
</dbReference>
<dbReference type="GO" id="GO:0006298">
    <property type="term" value="P:mismatch repair"/>
    <property type="evidence" value="ECO:0007669"/>
    <property type="project" value="UniProtKB-UniRule"/>
</dbReference>
<dbReference type="CDD" id="cd03284">
    <property type="entry name" value="ABC_MutS1"/>
    <property type="match status" value="1"/>
</dbReference>
<dbReference type="FunFam" id="1.10.1420.10:FF:000001">
    <property type="entry name" value="DNA mismatch repair protein MutS"/>
    <property type="match status" value="1"/>
</dbReference>
<dbReference type="FunFam" id="3.40.1170.10:FF:000001">
    <property type="entry name" value="DNA mismatch repair protein MutS"/>
    <property type="match status" value="1"/>
</dbReference>
<dbReference type="FunFam" id="3.40.50.300:FF:000896">
    <property type="entry name" value="DNA mismatch repair protein MutS"/>
    <property type="match status" value="1"/>
</dbReference>
<dbReference type="Gene3D" id="1.10.1420.10">
    <property type="match status" value="2"/>
</dbReference>
<dbReference type="Gene3D" id="3.40.1170.10">
    <property type="entry name" value="DNA repair protein MutS, domain I"/>
    <property type="match status" value="1"/>
</dbReference>
<dbReference type="Gene3D" id="3.30.420.110">
    <property type="entry name" value="MutS, connector domain"/>
    <property type="match status" value="1"/>
</dbReference>
<dbReference type="Gene3D" id="3.40.50.300">
    <property type="entry name" value="P-loop containing nucleotide triphosphate hydrolases"/>
    <property type="match status" value="1"/>
</dbReference>
<dbReference type="HAMAP" id="MF_00096">
    <property type="entry name" value="MutS"/>
    <property type="match status" value="1"/>
</dbReference>
<dbReference type="InterPro" id="IPR005748">
    <property type="entry name" value="DNA_mismatch_repair_MutS"/>
</dbReference>
<dbReference type="InterPro" id="IPR007695">
    <property type="entry name" value="DNA_mismatch_repair_MutS-lik_N"/>
</dbReference>
<dbReference type="InterPro" id="IPR017261">
    <property type="entry name" value="DNA_mismatch_repair_MutS/MSH"/>
</dbReference>
<dbReference type="InterPro" id="IPR000432">
    <property type="entry name" value="DNA_mismatch_repair_MutS_C"/>
</dbReference>
<dbReference type="InterPro" id="IPR007861">
    <property type="entry name" value="DNA_mismatch_repair_MutS_clamp"/>
</dbReference>
<dbReference type="InterPro" id="IPR007696">
    <property type="entry name" value="DNA_mismatch_repair_MutS_core"/>
</dbReference>
<dbReference type="InterPro" id="IPR016151">
    <property type="entry name" value="DNA_mismatch_repair_MutS_N"/>
</dbReference>
<dbReference type="InterPro" id="IPR036187">
    <property type="entry name" value="DNA_mismatch_repair_MutS_sf"/>
</dbReference>
<dbReference type="InterPro" id="IPR007860">
    <property type="entry name" value="DNA_mmatch_repair_MutS_con_dom"/>
</dbReference>
<dbReference type="InterPro" id="IPR045076">
    <property type="entry name" value="MutS"/>
</dbReference>
<dbReference type="InterPro" id="IPR036678">
    <property type="entry name" value="MutS_con_dom_sf"/>
</dbReference>
<dbReference type="InterPro" id="IPR027417">
    <property type="entry name" value="P-loop_NTPase"/>
</dbReference>
<dbReference type="NCBIfam" id="TIGR01070">
    <property type="entry name" value="mutS1"/>
    <property type="match status" value="1"/>
</dbReference>
<dbReference type="NCBIfam" id="NF003810">
    <property type="entry name" value="PRK05399.1"/>
    <property type="match status" value="1"/>
</dbReference>
<dbReference type="PANTHER" id="PTHR11361:SF34">
    <property type="entry name" value="DNA MISMATCH REPAIR PROTEIN MSH1, MITOCHONDRIAL"/>
    <property type="match status" value="1"/>
</dbReference>
<dbReference type="PANTHER" id="PTHR11361">
    <property type="entry name" value="DNA MISMATCH REPAIR PROTEIN MUTS FAMILY MEMBER"/>
    <property type="match status" value="1"/>
</dbReference>
<dbReference type="Pfam" id="PF01624">
    <property type="entry name" value="MutS_I"/>
    <property type="match status" value="1"/>
</dbReference>
<dbReference type="Pfam" id="PF05188">
    <property type="entry name" value="MutS_II"/>
    <property type="match status" value="1"/>
</dbReference>
<dbReference type="Pfam" id="PF05192">
    <property type="entry name" value="MutS_III"/>
    <property type="match status" value="1"/>
</dbReference>
<dbReference type="Pfam" id="PF05190">
    <property type="entry name" value="MutS_IV"/>
    <property type="match status" value="1"/>
</dbReference>
<dbReference type="Pfam" id="PF00488">
    <property type="entry name" value="MutS_V"/>
    <property type="match status" value="1"/>
</dbReference>
<dbReference type="PIRSF" id="PIRSF037677">
    <property type="entry name" value="DNA_mis_repair_Msh6"/>
    <property type="match status" value="1"/>
</dbReference>
<dbReference type="SMART" id="SM00534">
    <property type="entry name" value="MUTSac"/>
    <property type="match status" value="1"/>
</dbReference>
<dbReference type="SMART" id="SM00533">
    <property type="entry name" value="MUTSd"/>
    <property type="match status" value="1"/>
</dbReference>
<dbReference type="SUPFAM" id="SSF55271">
    <property type="entry name" value="DNA repair protein MutS, domain I"/>
    <property type="match status" value="1"/>
</dbReference>
<dbReference type="SUPFAM" id="SSF53150">
    <property type="entry name" value="DNA repair protein MutS, domain II"/>
    <property type="match status" value="1"/>
</dbReference>
<dbReference type="SUPFAM" id="SSF48334">
    <property type="entry name" value="DNA repair protein MutS, domain III"/>
    <property type="match status" value="1"/>
</dbReference>
<dbReference type="SUPFAM" id="SSF52540">
    <property type="entry name" value="P-loop containing nucleoside triphosphate hydrolases"/>
    <property type="match status" value="1"/>
</dbReference>
<dbReference type="PROSITE" id="PS00486">
    <property type="entry name" value="DNA_MISMATCH_REPAIR_2"/>
    <property type="match status" value="1"/>
</dbReference>
<keyword id="KW-0067">ATP-binding</keyword>
<keyword id="KW-0227">DNA damage</keyword>
<keyword id="KW-0234">DNA repair</keyword>
<keyword id="KW-0238">DNA-binding</keyword>
<keyword id="KW-0547">Nucleotide-binding</keyword>
<name>MUTS_STRP6</name>